<name>AT2B3_HUMAN</name>
<accession>Q16720</accession>
<accession>B7WNR8</accession>
<accession>B7WNY5</accession>
<accession>Q12995</accession>
<accession>Q16858</accession>
<sequence length="1220" mass="134197">MGDMANSSIEFHPKPQQQRDVPQAGGFGCTLAELRTLMELRGAEALQKIEEAYGDVSGLCRRLKTSPTEGLADNTNDLEKRRQIYGQNFIPPKQPKTFLQLVWEALQDVTLIILEVAAIVSLGLSFYAPPGEESEACGNVSGGAEDEGEAEAGWIEGAAILLSVICVVLVTAFNDWSKEKQFRGLQSRIEQEQKFTVIRNGQLLQVPVAALVVGDIAQVKYGDLLPADGVLIQANDLKIDESSLTGESDHVRKSADKDPMLLSGTHVMEGSGRMVVTAVGVNSQTGIIFTLLGAGGEEEEKKDKKGKQQDGAMESSQTKAKKQDGAVAMEMQPLKSAEGGEMEEREKKKANAPKKEKSVLQGKLTKLAVQIGKAGLVMSAITVIILVLYFVIETFVVEGRTWLAECTPVYVQYFVKFFIIGVTVLVVAVPEGLPLAVTISLAYSVKKMMKDNNLVRHLDACETMGNATAICSDKTGTLTTNRMTVVQSYLGDTHYKEIPAPSALTPKILDLLVHAISINSAYTTKILPPEKEGALPRQVGNKTECALLGFVLDLKRDFQPVREQIPEDKLYKVYTFNSVRKSMSTVIRMPDGGFRLFSKGASEILLKKCTNILNSNGELRGFRPRDRDDMVRKIIEPMACDGLRTICIAYRDFSAGQEPDWDNENEVVGDLTCIAVVGIEDPVRPEVPEAIRKCQRAGITVRMVTGDNINTARAIAAKCGIIQPGEDFLCLEGKEFNRRIRNEKGEIEQERLDKVWPKLRVLARSSPTDKHTLVKGIIDSTTGEQRQVVAVTGDGTNDGPALKKADVGFAMGIAGTDVAKEASDIILTDDNFTSIVKAVMWGRNVYDSISKFLQFQLTVNVVAVIVAFTGACITQDSPLKAVQMLWVNLIMDTFASLALATEPPTESLLLRKPYGRDKPLISRTMMKNILGHAVYQLAIIFTLLFVGELFFDIDSGRNAPLHSPPSEHYTIIFNTFVMMQLFNEINARKIHGERNVFDGIFSNPIFCTIVLGTFGIQIVIVQFGGKPFSCSPLSTEQWLWCLFVGVGELVWGQVIATIPTSQLKCLKEAGHGPGKDEMTDEELAEGEEEIDHAERELRRGQILWFRGLNRIQTQIRVVKAFRSSLYEGLEKPESKTSIHNFMATPEFLINDYTHNIPLIDDTDVDENEERLRAPPPPSPNQNNNAIDSGIYLTTHVTKSATSSVFSSSPGSPLHSVETSL</sequence>
<evidence type="ECO:0000250" key="1"/>
<evidence type="ECO:0000250" key="2">
    <source>
        <dbReference type="UniProtKB" id="Q64568"/>
    </source>
</evidence>
<evidence type="ECO:0000255" key="3"/>
<evidence type="ECO:0000256" key="4">
    <source>
        <dbReference type="SAM" id="MobiDB-lite"/>
    </source>
</evidence>
<evidence type="ECO:0000269" key="5">
    <source>
    </source>
</evidence>
<evidence type="ECO:0000269" key="6">
    <source>
    </source>
</evidence>
<evidence type="ECO:0000269" key="7">
    <source>
    </source>
</evidence>
<evidence type="ECO:0000269" key="8">
    <source>
    </source>
</evidence>
<evidence type="ECO:0000269" key="9">
    <source>
    </source>
</evidence>
<evidence type="ECO:0000269" key="10">
    <source>
    </source>
</evidence>
<evidence type="ECO:0000303" key="11">
    <source>
    </source>
</evidence>
<evidence type="ECO:0000303" key="12">
    <source>
    </source>
</evidence>
<evidence type="ECO:0000303" key="13">
    <source>
    </source>
</evidence>
<evidence type="ECO:0000305" key="14"/>
<evidence type="ECO:0000305" key="15">
    <source>
    </source>
</evidence>
<evidence type="ECO:0000305" key="16">
    <source>
    </source>
</evidence>
<evidence type="ECO:0000312" key="17">
    <source>
        <dbReference type="HGNC" id="HGNC:816"/>
    </source>
</evidence>
<comment type="function">
    <text evidence="2 6 7 8 9">ATP-driven Ca(2+) ion pump involved in the maintenance of basal intracellular Ca(2+) levels at the presynaptic terminals (PubMed:18029012, PubMed:22912398, PubMed:25953895, PubMed:27035656). Uses ATP as an energy source to transport cytosolic Ca(2+) ions across the plasma membrane to the extracellular compartment (PubMed:25953895, PubMed:27035656). May counter-transport protons, but the mechanism and the stoichiometry of this Ca(2+)/H(+) exchange remains to be established (By similarity).</text>
</comment>
<comment type="catalytic activity">
    <reaction evidence="15 16">
        <text>Ca(2+)(in) + ATP + H2O = Ca(2+)(out) + ADP + phosphate + H(+)</text>
        <dbReference type="Rhea" id="RHEA:18105"/>
        <dbReference type="ChEBI" id="CHEBI:15377"/>
        <dbReference type="ChEBI" id="CHEBI:15378"/>
        <dbReference type="ChEBI" id="CHEBI:29108"/>
        <dbReference type="ChEBI" id="CHEBI:30616"/>
        <dbReference type="ChEBI" id="CHEBI:43474"/>
        <dbReference type="ChEBI" id="CHEBI:456216"/>
        <dbReference type="EC" id="7.2.2.10"/>
    </reaction>
    <physiologicalReaction direction="left-to-right" evidence="15 16">
        <dbReference type="Rhea" id="RHEA:18106"/>
    </physiologicalReaction>
</comment>
<comment type="activity regulation">
    <text evidence="6">Down-regulated by YWHAE.</text>
</comment>
<comment type="subunit">
    <text evidence="5 6">Interacts with PDZD11 (PubMed:12763866). Interacts (via N-terminus) with YWHAE (PubMed:18029012).</text>
</comment>
<comment type="subcellular location">
    <subcellularLocation>
        <location evidence="6 8">Cell membrane</location>
        <topology evidence="3">Multi-pass membrane protein</topology>
    </subcellularLocation>
    <subcellularLocation>
        <location evidence="2">Presynaptic cell membrane</location>
        <topology evidence="3">Multi-pass membrane protein</topology>
    </subcellularLocation>
    <text evidence="2">Localized at parallel fiber terminals.</text>
</comment>
<comment type="alternative products">
    <event type="alternative splicing"/>
    <isoform>
        <id>Q16720-1</id>
        <name>XB</name>
        <name>AIICI</name>
        <sequence type="displayed"/>
    </isoform>
    <isoform>
        <id>Q16720-2</id>
        <name>XA</name>
        <name>AIICII</name>
        <sequence type="described" ref="VSP_000393"/>
    </isoform>
    <isoform>
        <id>Q16720-3</id>
        <name>ZA</name>
        <name>AICII</name>
        <sequence type="described" ref="VSP_000392 VSP_000393"/>
    </isoform>
    <isoform>
        <id>Q16720-4</id>
        <name>ZB</name>
        <name>AICI</name>
        <sequence type="described" ref="VSP_000392"/>
    </isoform>
    <isoform>
        <id>Q16720-5</id>
        <name>XE</name>
        <name>AIICV</name>
        <sequence type="described" ref="VSP_000394"/>
    </isoform>
    <isoform>
        <id>Q16720-6</id>
        <name>ZE</name>
        <name>AICV</name>
        <sequence type="described" ref="VSP_000392 VSP_000394"/>
    </isoform>
    <isoform>
        <id>Q16720-7</id>
        <name>XG</name>
        <name>AIICVII</name>
        <sequence type="described" ref="VSP_000395"/>
    </isoform>
    <isoform>
        <id>Q16720-8</id>
        <name>ZG</name>
        <name>AICVII</name>
        <sequence type="described" ref="VSP_000392 VSP_000395"/>
    </isoform>
    <text>There is a combination of two alternatively spliced domains at N-terminal site A (X and Z) and at C-terminal site C (A, B, E and G). The splice sites have mostly been studied independently. Full isoforms so far detected are isoform XA and isoform XB. Experimental confirmation may be lacking for some isoforms.</text>
</comment>
<comment type="tissue specificity">
    <text evidence="9 10">Highly expressed in the cerebellum (PubMed:8187550). Expressed in adrenal glands (PubMed:27035656).</text>
</comment>
<comment type="developmental stage">
    <text evidence="10">Expressed in fetal skeletal muscle.</text>
</comment>
<comment type="disease" evidence="7 8">
    <disease id="DI-03640">
        <name>Spinocerebellar ataxia, X-linked 1</name>
        <acronym>SCAX1</acronym>
        <description>Spinocerebellar ataxia is a clinically and genetically heterogeneous group of cerebellar disorders. Patients show progressive incoordination of gait and often poor coordination of hands, speech and eye movements, due to degeneration of the cerebellum with variable involvement of the brainstem and spinal cord. SCAX1 is characterized by hypotonia at birth, delayed motor development, gait ataxia, difficulty standing, dysarthria, and slow eye movements. Brain MRI shows cerebellar ataxia.</description>
        <dbReference type="MIM" id="302500"/>
    </disease>
    <text>The disease is caused by variants affecting the gene represented in this entry.</text>
</comment>
<comment type="similarity">
    <text evidence="14">Belongs to the cation transport ATPase (P-type) (TC 3.A.3) family. Type IIB subfamily.</text>
</comment>
<protein>
    <recommendedName>
        <fullName>Plasma membrane calcium-transporting ATPase 3</fullName>
        <shortName evidence="11">PMCA3</shortName>
        <ecNumber evidence="15 16">7.2.2.10</ecNumber>
    </recommendedName>
    <alternativeName>
        <fullName>Plasma membrane calcium ATPase isoform 3</fullName>
    </alternativeName>
    <alternativeName>
        <fullName>Plasma membrane calcium pump isoform 3</fullName>
    </alternativeName>
</protein>
<gene>
    <name evidence="12 17" type="primary">ATP2B3</name>
</gene>
<keyword id="KW-0025">Alternative splicing</keyword>
<keyword id="KW-0067">ATP-binding</keyword>
<keyword id="KW-0106">Calcium</keyword>
<keyword id="KW-0109">Calcium transport</keyword>
<keyword id="KW-0112">Calmodulin-binding</keyword>
<keyword id="KW-1003">Cell membrane</keyword>
<keyword id="KW-0966">Cell projection</keyword>
<keyword id="KW-0225">Disease variant</keyword>
<keyword id="KW-0406">Ion transport</keyword>
<keyword id="KW-0460">Magnesium</keyword>
<keyword id="KW-0472">Membrane</keyword>
<keyword id="KW-0479">Metal-binding</keyword>
<keyword id="KW-0523">Neurodegeneration</keyword>
<keyword id="KW-0547">Nucleotide-binding</keyword>
<keyword id="KW-0597">Phosphoprotein</keyword>
<keyword id="KW-1267">Proteomics identification</keyword>
<keyword id="KW-1185">Reference proteome</keyword>
<keyword id="KW-0770">Synapse</keyword>
<keyword id="KW-1278">Translocase</keyword>
<keyword id="KW-0812">Transmembrane</keyword>
<keyword id="KW-1133">Transmembrane helix</keyword>
<keyword id="KW-0813">Transport</keyword>
<feature type="chain" id="PRO_0000046218" description="Plasma membrane calcium-transporting ATPase 3">
    <location>
        <begin position="1"/>
        <end position="1220"/>
    </location>
</feature>
<feature type="topological domain" description="Cytoplasmic" evidence="3">
    <location>
        <begin position="1"/>
        <end position="97"/>
    </location>
</feature>
<feature type="transmembrane region" description="Helical" evidence="3">
    <location>
        <begin position="98"/>
        <end position="118"/>
    </location>
</feature>
<feature type="topological domain" description="Extracellular" evidence="3">
    <location>
        <begin position="119"/>
        <end position="155"/>
    </location>
</feature>
<feature type="transmembrane region" description="Helical" evidence="3">
    <location>
        <begin position="156"/>
        <end position="176"/>
    </location>
</feature>
<feature type="topological domain" description="Cytoplasmic" evidence="3">
    <location>
        <begin position="177"/>
        <end position="364"/>
    </location>
</feature>
<feature type="transmembrane region" description="Helical" evidence="3">
    <location>
        <begin position="365"/>
        <end position="384"/>
    </location>
</feature>
<feature type="topological domain" description="Extracellular" evidence="3">
    <location>
        <begin position="385"/>
        <end position="417"/>
    </location>
</feature>
<feature type="transmembrane region" description="Helical" evidence="3">
    <location>
        <begin position="418"/>
        <end position="435"/>
    </location>
</feature>
<feature type="topological domain" description="Cytoplasmic" evidence="3">
    <location>
        <begin position="436"/>
        <end position="849"/>
    </location>
</feature>
<feature type="transmembrane region" description="Helical" evidence="3">
    <location>
        <begin position="850"/>
        <end position="869"/>
    </location>
</feature>
<feature type="topological domain" description="Extracellular" evidence="3">
    <location>
        <begin position="870"/>
        <end position="879"/>
    </location>
</feature>
<feature type="transmembrane region" description="Helical" evidence="3">
    <location>
        <begin position="880"/>
        <end position="900"/>
    </location>
</feature>
<feature type="topological domain" description="Cytoplasmic" evidence="3">
    <location>
        <begin position="901"/>
        <end position="920"/>
    </location>
</feature>
<feature type="transmembrane region" description="Helical" evidence="3">
    <location>
        <begin position="921"/>
        <end position="943"/>
    </location>
</feature>
<feature type="topological domain" description="Extracellular" evidence="3">
    <location>
        <begin position="944"/>
        <end position="961"/>
    </location>
</feature>
<feature type="transmembrane region" description="Helical" evidence="3">
    <location>
        <begin position="962"/>
        <end position="983"/>
    </location>
</feature>
<feature type="topological domain" description="Cytoplasmic" evidence="3">
    <location>
        <begin position="984"/>
        <end position="1002"/>
    </location>
</feature>
<feature type="transmembrane region" description="Helical" evidence="3">
    <location>
        <begin position="1003"/>
        <end position="1024"/>
    </location>
</feature>
<feature type="topological domain" description="Extracellular" evidence="3">
    <location>
        <begin position="1025"/>
        <end position="1034"/>
    </location>
</feature>
<feature type="transmembrane region" description="Helical" evidence="3">
    <location>
        <begin position="1035"/>
        <end position="1056"/>
    </location>
</feature>
<feature type="topological domain" description="Cytoplasmic" evidence="3">
    <location>
        <begin position="1057"/>
        <end position="1220"/>
    </location>
</feature>
<feature type="region of interest" description="Disordered" evidence="4">
    <location>
        <begin position="1"/>
        <end position="23"/>
    </location>
</feature>
<feature type="region of interest" description="Disordered" evidence="4">
    <location>
        <begin position="298"/>
        <end position="355"/>
    </location>
</feature>
<feature type="region of interest" description="Calmodulin-binding subdomain A" evidence="1">
    <location>
        <begin position="1097"/>
        <end position="1114"/>
    </location>
</feature>
<feature type="region of interest" description="Calmodulin-binding subdomain B" evidence="1">
    <location>
        <begin position="1115"/>
        <end position="1124"/>
    </location>
</feature>
<feature type="region of interest" description="Disordered" evidence="4">
    <location>
        <begin position="1166"/>
        <end position="1186"/>
    </location>
</feature>
<feature type="compositionally biased region" description="Polar residues" evidence="4">
    <location>
        <begin position="1"/>
        <end position="20"/>
    </location>
</feature>
<feature type="compositionally biased region" description="Basic and acidic residues" evidence="4">
    <location>
        <begin position="299"/>
        <end position="308"/>
    </location>
</feature>
<feature type="compositionally biased region" description="Basic and acidic residues" evidence="4">
    <location>
        <begin position="342"/>
        <end position="355"/>
    </location>
</feature>
<feature type="active site" description="4-aspartylphosphate intermediate" evidence="1">
    <location>
        <position position="473"/>
    </location>
</feature>
<feature type="binding site" evidence="1">
    <location>
        <position position="794"/>
    </location>
    <ligand>
        <name>Mg(2+)</name>
        <dbReference type="ChEBI" id="CHEBI:18420"/>
    </ligand>
</feature>
<feature type="binding site" evidence="1">
    <location>
        <position position="798"/>
    </location>
    <ligand>
        <name>Mg(2+)</name>
        <dbReference type="ChEBI" id="CHEBI:18420"/>
    </ligand>
</feature>
<feature type="modified residue" description="Phosphoserine" evidence="2">
    <location>
        <position position="8"/>
    </location>
</feature>
<feature type="modified residue" description="Phosphothreonine" evidence="2">
    <location>
        <position position="1079"/>
    </location>
</feature>
<feature type="modified residue" description="Phosphothreonine; by PKC" evidence="1">
    <location>
        <position position="1113"/>
    </location>
</feature>
<feature type="splice variant" id="VSP_000392" description="In isoform ZA, isoform ZB, isoform ZE and isoform ZG." evidence="14">
    <location>
        <begin position="306"/>
        <end position="319"/>
    </location>
</feature>
<feature type="splice variant" id="VSP_000393" description="In isoform XA and isoform ZA." evidence="13">
    <original>IRVVKAFRSSLYEGLEKPESKTSIHNFMATPEFLINDYTHNIPLIDDTDVDENEERLRAPPPPSPNQNNNAIDSGIYLTTHVTKSATSSVFSSSPGSPLHSVETSL</original>
    <variation>MEVVSTFKRSGSVQGAVRRRSSVLSQLHDVTNLSTPTHAILSAANPTSAAGNPGGESVP</variation>
    <location>
        <begin position="1115"/>
        <end position="1220"/>
    </location>
</feature>
<feature type="splice variant" id="VSP_000394" description="In isoform XE and isoform ZE." evidence="14">
    <original>IRVVKAFRSSLYEGLEKPESKTSIHNFMATPEFLINDYTHNIPLIDDTDVDENEERLRAPPPPSPNQNNNAIDSGIYLTTHVTKSATSSVFSSSPGSPLHSVETSL</original>
    <variation>MEVVSTFKRSGSVQGAVRRRSSVLSQLHDVTNLSTPTHAILSAANPTSAAGSES</variation>
    <location>
        <begin position="1115"/>
        <end position="1220"/>
    </location>
</feature>
<feature type="splice variant" id="VSP_000395" description="In isoform XG and isoform ZG." evidence="14">
    <original>IRVVKAFRSSLYEGLEKPESKTSIHNFMATPEFLINDYTHNIPLIDDTDVDENEERLRAPPPPSPNQNNNAIDSGIYLTTHVTKSATSSVFSSSPGSPLHSVETSL</original>
    <variation>VCWDGKKMLRTTEVG</variation>
    <location>
        <begin position="1115"/>
        <end position="1220"/>
    </location>
</feature>
<feature type="sequence variant" id="VAR_027928" description="In dbSNP:rs2269409.">
    <original>I</original>
    <variation>M</variation>
    <location>
        <position position="198"/>
    </location>
</feature>
<feature type="sequence variant" id="VAR_084697" description="In an aldosterone-producing adenoma sample; somatic mutation; increases intracellular calcium concentration that leads to autonomous aldosterone secretion." evidence="9">
    <location>
        <begin position="425"/>
        <end position="426"/>
    </location>
</feature>
<feature type="sequence variant" id="VAR_084698" description="In SCAX1; the mutant protein is expressed at the plasma membrane, but shows impaired extrusion of intracellular calcium." evidence="8">
    <original>R</original>
    <variation>H</variation>
    <location>
        <position position="482"/>
    </location>
</feature>
<feature type="sequence variant" id="VAR_069308" description="In SCAX1; the mutant protein is expressed at the plasma membrane but shows impaired extrusion of intracellular calcium with prolonged retention of cytoplasmic calcium compared to wild-type under physiologic conditions; dbSNP:rs397514619." evidence="7">
    <original>G</original>
    <variation>D</variation>
    <location>
        <position position="1107"/>
    </location>
</feature>
<feature type="mutagenesis site" description="Impaired ATPase activity." evidence="8">
    <original>D</original>
    <variation>A</variation>
    <location>
        <position position="473"/>
    </location>
</feature>
<feature type="sequence conflict" description="In Ref. 1; AAB09762/AAB38530." evidence="14" ref="1">
    <original>I</original>
    <variation>V</variation>
    <location>
        <position position="587"/>
    </location>
</feature>
<feature type="sequence conflict" description="In Ref. 1; AAB09762/AAB38530." evidence="14" ref="1">
    <original>S</original>
    <variation>Y</variation>
    <location>
        <position position="654"/>
    </location>
</feature>
<proteinExistence type="evidence at protein level"/>
<reference key="1">
    <citation type="journal article" date="1996" name="Biochim. Biophys. Acta">
        <title>Primary structure of human plasma membrane Ca(2+)-ATPase isoform 3.</title>
        <authorList>
            <person name="Brown B."/>
            <person name="Hilfiker H."/>
            <person name="Demarco S.J."/>
            <person name="Zacharias D.A."/>
            <person name="Greenwood T.M."/>
            <person name="Carafoli E."/>
            <person name="Strehler E.E."/>
        </authorList>
    </citation>
    <scope>NUCLEOTIDE SEQUENCE [MRNA] (ISOFORMS XA AND XB)</scope>
    <source>
        <tissue>Brain</tissue>
    </source>
</reference>
<reference key="2">
    <citation type="journal article" date="2005" name="Nature">
        <title>The DNA sequence of the human X chromosome.</title>
        <authorList>
            <person name="Ross M.T."/>
            <person name="Grafham D.V."/>
            <person name="Coffey A.J."/>
            <person name="Scherer S."/>
            <person name="McLay K."/>
            <person name="Muzny D."/>
            <person name="Platzer M."/>
            <person name="Howell G.R."/>
            <person name="Burrows C."/>
            <person name="Bird C.P."/>
            <person name="Frankish A."/>
            <person name="Lovell F.L."/>
            <person name="Howe K.L."/>
            <person name="Ashurst J.L."/>
            <person name="Fulton R.S."/>
            <person name="Sudbrak R."/>
            <person name="Wen G."/>
            <person name="Jones M.C."/>
            <person name="Hurles M.E."/>
            <person name="Andrews T.D."/>
            <person name="Scott C.E."/>
            <person name="Searle S."/>
            <person name="Ramser J."/>
            <person name="Whittaker A."/>
            <person name="Deadman R."/>
            <person name="Carter N.P."/>
            <person name="Hunt S.E."/>
            <person name="Chen R."/>
            <person name="Cree A."/>
            <person name="Gunaratne P."/>
            <person name="Havlak P."/>
            <person name="Hodgson A."/>
            <person name="Metzker M.L."/>
            <person name="Richards S."/>
            <person name="Scott G."/>
            <person name="Steffen D."/>
            <person name="Sodergren E."/>
            <person name="Wheeler D.A."/>
            <person name="Worley K.C."/>
            <person name="Ainscough R."/>
            <person name="Ambrose K.D."/>
            <person name="Ansari-Lari M.A."/>
            <person name="Aradhya S."/>
            <person name="Ashwell R.I."/>
            <person name="Babbage A.K."/>
            <person name="Bagguley C.L."/>
            <person name="Ballabio A."/>
            <person name="Banerjee R."/>
            <person name="Barker G.E."/>
            <person name="Barlow K.F."/>
            <person name="Barrett I.P."/>
            <person name="Bates K.N."/>
            <person name="Beare D.M."/>
            <person name="Beasley H."/>
            <person name="Beasley O."/>
            <person name="Beck A."/>
            <person name="Bethel G."/>
            <person name="Blechschmidt K."/>
            <person name="Brady N."/>
            <person name="Bray-Allen S."/>
            <person name="Bridgeman A.M."/>
            <person name="Brown A.J."/>
            <person name="Brown M.J."/>
            <person name="Bonnin D."/>
            <person name="Bruford E.A."/>
            <person name="Buhay C."/>
            <person name="Burch P."/>
            <person name="Burford D."/>
            <person name="Burgess J."/>
            <person name="Burrill W."/>
            <person name="Burton J."/>
            <person name="Bye J.M."/>
            <person name="Carder C."/>
            <person name="Carrel L."/>
            <person name="Chako J."/>
            <person name="Chapman J.C."/>
            <person name="Chavez D."/>
            <person name="Chen E."/>
            <person name="Chen G."/>
            <person name="Chen Y."/>
            <person name="Chen Z."/>
            <person name="Chinault C."/>
            <person name="Ciccodicola A."/>
            <person name="Clark S.Y."/>
            <person name="Clarke G."/>
            <person name="Clee C.M."/>
            <person name="Clegg S."/>
            <person name="Clerc-Blankenburg K."/>
            <person name="Clifford K."/>
            <person name="Cobley V."/>
            <person name="Cole C.G."/>
            <person name="Conquer J.S."/>
            <person name="Corby N."/>
            <person name="Connor R.E."/>
            <person name="David R."/>
            <person name="Davies J."/>
            <person name="Davis C."/>
            <person name="Davis J."/>
            <person name="Delgado O."/>
            <person name="Deshazo D."/>
            <person name="Dhami P."/>
            <person name="Ding Y."/>
            <person name="Dinh H."/>
            <person name="Dodsworth S."/>
            <person name="Draper H."/>
            <person name="Dugan-Rocha S."/>
            <person name="Dunham A."/>
            <person name="Dunn M."/>
            <person name="Durbin K.J."/>
            <person name="Dutta I."/>
            <person name="Eades T."/>
            <person name="Ellwood M."/>
            <person name="Emery-Cohen A."/>
            <person name="Errington H."/>
            <person name="Evans K.L."/>
            <person name="Faulkner L."/>
            <person name="Francis F."/>
            <person name="Frankland J."/>
            <person name="Fraser A.E."/>
            <person name="Galgoczy P."/>
            <person name="Gilbert J."/>
            <person name="Gill R."/>
            <person name="Gloeckner G."/>
            <person name="Gregory S.G."/>
            <person name="Gribble S."/>
            <person name="Griffiths C."/>
            <person name="Grocock R."/>
            <person name="Gu Y."/>
            <person name="Gwilliam R."/>
            <person name="Hamilton C."/>
            <person name="Hart E.A."/>
            <person name="Hawes A."/>
            <person name="Heath P.D."/>
            <person name="Heitmann K."/>
            <person name="Hennig S."/>
            <person name="Hernandez J."/>
            <person name="Hinzmann B."/>
            <person name="Ho S."/>
            <person name="Hoffs M."/>
            <person name="Howden P.J."/>
            <person name="Huckle E.J."/>
            <person name="Hume J."/>
            <person name="Hunt P.J."/>
            <person name="Hunt A.R."/>
            <person name="Isherwood J."/>
            <person name="Jacob L."/>
            <person name="Johnson D."/>
            <person name="Jones S."/>
            <person name="de Jong P.J."/>
            <person name="Joseph S.S."/>
            <person name="Keenan S."/>
            <person name="Kelly S."/>
            <person name="Kershaw J.K."/>
            <person name="Khan Z."/>
            <person name="Kioschis P."/>
            <person name="Klages S."/>
            <person name="Knights A.J."/>
            <person name="Kosiura A."/>
            <person name="Kovar-Smith C."/>
            <person name="Laird G.K."/>
            <person name="Langford C."/>
            <person name="Lawlor S."/>
            <person name="Leversha M."/>
            <person name="Lewis L."/>
            <person name="Liu W."/>
            <person name="Lloyd C."/>
            <person name="Lloyd D.M."/>
            <person name="Loulseged H."/>
            <person name="Loveland J.E."/>
            <person name="Lovell J.D."/>
            <person name="Lozado R."/>
            <person name="Lu J."/>
            <person name="Lyne R."/>
            <person name="Ma J."/>
            <person name="Maheshwari M."/>
            <person name="Matthews L.H."/>
            <person name="McDowall J."/>
            <person name="McLaren S."/>
            <person name="McMurray A."/>
            <person name="Meidl P."/>
            <person name="Meitinger T."/>
            <person name="Milne S."/>
            <person name="Miner G."/>
            <person name="Mistry S.L."/>
            <person name="Morgan M."/>
            <person name="Morris S."/>
            <person name="Mueller I."/>
            <person name="Mullikin J.C."/>
            <person name="Nguyen N."/>
            <person name="Nordsiek G."/>
            <person name="Nyakatura G."/>
            <person name="O'dell C.N."/>
            <person name="Okwuonu G."/>
            <person name="Palmer S."/>
            <person name="Pandian R."/>
            <person name="Parker D."/>
            <person name="Parrish J."/>
            <person name="Pasternak S."/>
            <person name="Patel D."/>
            <person name="Pearce A.V."/>
            <person name="Pearson D.M."/>
            <person name="Pelan S.E."/>
            <person name="Perez L."/>
            <person name="Porter K.M."/>
            <person name="Ramsey Y."/>
            <person name="Reichwald K."/>
            <person name="Rhodes S."/>
            <person name="Ridler K.A."/>
            <person name="Schlessinger D."/>
            <person name="Schueler M.G."/>
            <person name="Sehra H.K."/>
            <person name="Shaw-Smith C."/>
            <person name="Shen H."/>
            <person name="Sheridan E.M."/>
            <person name="Shownkeen R."/>
            <person name="Skuce C.D."/>
            <person name="Smith M.L."/>
            <person name="Sotheran E.C."/>
            <person name="Steingruber H.E."/>
            <person name="Steward C.A."/>
            <person name="Storey R."/>
            <person name="Swann R.M."/>
            <person name="Swarbreck D."/>
            <person name="Tabor P.E."/>
            <person name="Taudien S."/>
            <person name="Taylor T."/>
            <person name="Teague B."/>
            <person name="Thomas K."/>
            <person name="Thorpe A."/>
            <person name="Timms K."/>
            <person name="Tracey A."/>
            <person name="Trevanion S."/>
            <person name="Tromans A.C."/>
            <person name="d'Urso M."/>
            <person name="Verduzco D."/>
            <person name="Villasana D."/>
            <person name="Waldron L."/>
            <person name="Wall M."/>
            <person name="Wang Q."/>
            <person name="Warren J."/>
            <person name="Warry G.L."/>
            <person name="Wei X."/>
            <person name="West A."/>
            <person name="Whitehead S.L."/>
            <person name="Whiteley M.N."/>
            <person name="Wilkinson J.E."/>
            <person name="Willey D.L."/>
            <person name="Williams G."/>
            <person name="Williams L."/>
            <person name="Williamson A."/>
            <person name="Williamson H."/>
            <person name="Wilming L."/>
            <person name="Woodmansey R.L."/>
            <person name="Wray P.W."/>
            <person name="Yen J."/>
            <person name="Zhang J."/>
            <person name="Zhou J."/>
            <person name="Zoghbi H."/>
            <person name="Zorilla S."/>
            <person name="Buck D."/>
            <person name="Reinhardt R."/>
            <person name="Poustka A."/>
            <person name="Rosenthal A."/>
            <person name="Lehrach H."/>
            <person name="Meindl A."/>
            <person name="Minx P.J."/>
            <person name="Hillier L.W."/>
            <person name="Willard H.F."/>
            <person name="Wilson R.K."/>
            <person name="Waterston R.H."/>
            <person name="Rice C.M."/>
            <person name="Vaudin M."/>
            <person name="Coulson A."/>
            <person name="Nelson D.L."/>
            <person name="Weinstock G."/>
            <person name="Sulston J.E."/>
            <person name="Durbin R.M."/>
            <person name="Hubbard T."/>
            <person name="Gibbs R.A."/>
            <person name="Beck S."/>
            <person name="Rogers J."/>
            <person name="Bentley D.R."/>
        </authorList>
    </citation>
    <scope>NUCLEOTIDE SEQUENCE [LARGE SCALE GENOMIC DNA]</scope>
</reference>
<reference key="3">
    <citation type="submission" date="2005-09" db="EMBL/GenBank/DDBJ databases">
        <authorList>
            <person name="Mural R.J."/>
            <person name="Istrail S."/>
            <person name="Sutton G.G."/>
            <person name="Florea L."/>
            <person name="Halpern A.L."/>
            <person name="Mobarry C.M."/>
            <person name="Lippert R."/>
            <person name="Walenz B."/>
            <person name="Shatkay H."/>
            <person name="Dew I."/>
            <person name="Miller J.R."/>
            <person name="Flanigan M.J."/>
            <person name="Edwards N.J."/>
            <person name="Bolanos R."/>
            <person name="Fasulo D."/>
            <person name="Halldorsson B.V."/>
            <person name="Hannenhalli S."/>
            <person name="Turner R."/>
            <person name="Yooseph S."/>
            <person name="Lu F."/>
            <person name="Nusskern D.R."/>
            <person name="Shue B.C."/>
            <person name="Zheng X.H."/>
            <person name="Zhong F."/>
            <person name="Delcher A.L."/>
            <person name="Huson D.H."/>
            <person name="Kravitz S.A."/>
            <person name="Mouchard L."/>
            <person name="Reinert K."/>
            <person name="Remington K.A."/>
            <person name="Clark A.G."/>
            <person name="Waterman M.S."/>
            <person name="Eichler E.E."/>
            <person name="Adams M.D."/>
            <person name="Hunkapiller M.W."/>
            <person name="Myers E.W."/>
            <person name="Venter J.C."/>
        </authorList>
    </citation>
    <scope>NUCLEOTIDE SEQUENCE [LARGE SCALE GENOMIC DNA]</scope>
</reference>
<reference key="4">
    <citation type="journal article" date="1994" name="Cytogenet. Cell Genet.">
        <title>Localization of two genes encoding plasma membrane Ca2+ ATPases isoforms 2 (ATP2B2) and 3 (ATP2B3) to human chromosomes 3p26--&gt;p25 and Xq28, respectively.</title>
        <authorList>
            <person name="Wang M.G."/>
            <person name="Yi H."/>
            <person name="Hilfiker H."/>
            <person name="Carafoli E."/>
            <person name="Strehler E.E."/>
            <person name="McBride O.W."/>
        </authorList>
    </citation>
    <scope>NUCLEOTIDE SEQUENCE [GENOMIC DNA] OF 1-319</scope>
    <scope>ALTERNATIVE SPLICING (ISOFORMS XB/XA/XE/XG)</scope>
    <scope>TISSUE SPECIFICITY</scope>
    <scope>DEVELOPMENTAL STAGE</scope>
</reference>
<reference key="5">
    <citation type="journal article" date="2000" name="Genome Res.">
        <title>Comparative genome sequence analysis of the Bpa/Str region in mouse and man.</title>
        <authorList>
            <person name="Mallon A.-M."/>
            <person name="Platzer M."/>
            <person name="Bate R."/>
            <person name="Gloeckner G."/>
            <person name="Botcherby M.R.M."/>
            <person name="Nordsiek G."/>
            <person name="Strivens M.A."/>
            <person name="Kioschis P."/>
            <person name="Dangel A."/>
            <person name="Cunningham D."/>
            <person name="Straw R.N.A."/>
            <person name="Weston P."/>
            <person name="Gilbert M."/>
            <person name="Fernando S."/>
            <person name="Goodall K."/>
            <person name="Hunter G."/>
            <person name="Greystrong J.S."/>
            <person name="Clarke D."/>
            <person name="Kimberley C."/>
            <person name="Goerdes M."/>
            <person name="Blechschmidt K."/>
            <person name="Rump A."/>
            <person name="Hinzmann B."/>
            <person name="Mundy C.R."/>
            <person name="Miller W."/>
            <person name="Poustka A."/>
            <person name="Herman G.E."/>
            <person name="Rhodes M."/>
            <person name="Denny P."/>
            <person name="Rosenthal A."/>
            <person name="Brown S.D.M."/>
        </authorList>
    </citation>
    <scope>NUCLEOTIDE SEQUENCE [GENOMIC DNA] OF 1-1053</scope>
    <scope>ALTERNATIVE SPLICING (ISOFORMS XB/XA/XE/XG)</scope>
</reference>
<reference key="6">
    <citation type="journal article" date="1993" name="J. Biol. Chem.">
        <title>Quantitative analysis of alternative splicing options of human plasma membrane calcium pump genes.</title>
        <authorList>
            <person name="Stauffer T.P."/>
            <person name="Hilfiker H."/>
            <person name="Carafoli E."/>
            <person name="Strehler E.E."/>
        </authorList>
    </citation>
    <scope>PARTIAL NUCLEOTIDE SEQUENCE [MRNA] (ISOFORMS XG/ZG AND XA/ZA)</scope>
    <scope>ALTERNATIVE SPLICING</scope>
    <source>
        <tissue>Brain cortex</tissue>
    </source>
</reference>
<reference key="7">
    <citation type="journal article" date="1994" name="J. Biol. Chem.">
        <authorList>
            <person name="Stauffer T.P."/>
            <person name="Hilfiker H."/>
            <person name="Carafoli E."/>
            <person name="Strehler E.E."/>
        </authorList>
    </citation>
    <scope>ERRATUM OF PUBMED:8245032</scope>
</reference>
<reference key="8">
    <citation type="journal article" date="2003" name="Ann. N. Y. Acad. Sci.">
        <title>Characterization of PISP, a novel single-PDZ protein that binds to all plasma membrane Ca2+-ATPase b-splice variants.</title>
        <authorList>
            <person name="Goellner G.M."/>
            <person name="DeMarco S.J."/>
            <person name="Strehler E.E."/>
        </authorList>
    </citation>
    <scope>INTERACTION WITH PDZD11</scope>
</reference>
<reference key="9">
    <citation type="journal article" date="2008" name="Cell Calcium">
        <title>Inhibitory interaction of the 14-3-3 proteins with ubiquitous (PMCA1) and tissue-specific (PMCA3) isoforms of the plasma membrane Ca2+ pump.</title>
        <authorList>
            <person name="Linde C.I."/>
            <person name="Di Leva F."/>
            <person name="Domi T."/>
            <person name="Tosatto S.C."/>
            <person name="Brini M."/>
            <person name="Carafoli E."/>
        </authorList>
    </citation>
    <scope>FUNCTION</scope>
    <scope>SUBCELLULAR LOCATION</scope>
    <scope>INTERACTION WITH YWHAE</scope>
    <scope>ACTIVITY REGULATION</scope>
</reference>
<reference key="10">
    <citation type="journal article" date="2016" name="Endocrinology">
        <title>Cellular Pathophysiology of an Adrenal Adenoma-Associated Mutant of the Plasma Membrane Ca(2+)-ATPase ATP2B3.</title>
        <authorList>
            <person name="Tauber P."/>
            <person name="Aichinger B."/>
            <person name="Christ C."/>
            <person name="Stindl J."/>
            <person name="Rhayem Y."/>
            <person name="Beuschlein F."/>
            <person name="Warth R."/>
            <person name="Bandulik S."/>
        </authorList>
    </citation>
    <scope>FUNCTION</scope>
    <scope>TISSUE SPECIFICITY</scope>
    <scope>CHARACTERIZATION OF VARIANT 425-LEU-VAL-426 DEL</scope>
</reference>
<reference key="11">
    <citation type="journal article" date="2012" name="Proc. Natl. Acad. Sci. U.S.A.">
        <title>Mutation of plasma membrane Ca2+ ATPase isoform 3 in a family with X-linked congenital cerebellar ataxia impairs Ca2+ homeostasis.</title>
        <authorList>
            <person name="Zanni G."/>
            <person name="Cali T."/>
            <person name="Kalscheuer V.M."/>
            <person name="Ottolini D."/>
            <person name="Barresi S."/>
            <person name="Lebrun N."/>
            <person name="Montecchi-Palazzi L."/>
            <person name="Hu H."/>
            <person name="Chelly J."/>
            <person name="Bertini E."/>
            <person name="Brini M."/>
            <person name="Carafoli E."/>
        </authorList>
    </citation>
    <scope>INVOLVEMENT IN SCAX1</scope>
    <scope>VARIANT SCAX1 ASP-1107</scope>
    <scope>CHARACTERIZATION OF VARIANT SCAX1 ASP-1107</scope>
    <scope>FUNCTION</scope>
    <scope>CATALYTIC ACTIVITY</scope>
</reference>
<reference key="12">
    <citation type="journal article" date="2015" name="J. Biol. Chem.">
        <title>A Novel Mutation in Isoform 3 of the Plasma Membrane Ca2+ Pump Impairs Cellular Ca2+ Homeostasis in a Patient with Cerebellar Ataxia and Laminin Subunit 1alpha Mutations.</title>
        <authorList>
            <person name="Cali T."/>
            <person name="Lopreiato R."/>
            <person name="Shimony J."/>
            <person name="Vineyard M."/>
            <person name="Frizzarin M."/>
            <person name="Zanni G."/>
            <person name="Zanotti G."/>
            <person name="Brini M."/>
            <person name="Shinawi M."/>
            <person name="Carafoli E."/>
        </authorList>
    </citation>
    <scope>INVOLVEMENT IN SCAX1</scope>
    <scope>CHARACTERIZATION OF VARIANT SCAX1 HIS-482</scope>
    <scope>FUNCTION</scope>
    <scope>CATALYTIC ACTIVITY</scope>
    <scope>MUTAGENESIS OF ASP-473</scope>
    <scope>SUBCELLULAR LOCATION</scope>
</reference>
<dbReference type="EC" id="7.2.2.10" evidence="15 16"/>
<dbReference type="EMBL" id="U57971">
    <property type="protein sequence ID" value="AAB09762.1"/>
    <property type="molecule type" value="mRNA"/>
</dbReference>
<dbReference type="EMBL" id="U60414">
    <property type="protein sequence ID" value="AAB38530.1"/>
    <property type="molecule type" value="mRNA"/>
</dbReference>
<dbReference type="EMBL" id="AH006061">
    <property type="protein sequence ID" value="AAC15078.1"/>
    <property type="molecule type" value="Genomic_DNA"/>
</dbReference>
<dbReference type="EMBL" id="CH471172">
    <property type="protein sequence ID" value="EAW72859.1"/>
    <property type="molecule type" value="Genomic_DNA"/>
</dbReference>
<dbReference type="EMBL" id="U82695">
    <property type="status" value="NOT_ANNOTATED_CDS"/>
    <property type="molecule type" value="Genomic_DNA"/>
</dbReference>
<dbReference type="EMBL" id="U15689">
    <property type="protein sequence ID" value="AAA60986.1"/>
    <property type="molecule type" value="mRNA"/>
</dbReference>
<dbReference type="EMBL" id="U15690">
    <property type="protein sequence ID" value="AAA60987.1"/>
    <property type="molecule type" value="mRNA"/>
</dbReference>
<dbReference type="CCDS" id="CCDS14722.1">
    <molecule id="Q16720-2"/>
</dbReference>
<dbReference type="CCDS" id="CCDS35440.1">
    <molecule id="Q16720-1"/>
</dbReference>
<dbReference type="CCDS" id="CCDS94697.1">
    <molecule id="Q16720-6"/>
</dbReference>
<dbReference type="RefSeq" id="NP_001001344.1">
    <molecule id="Q16720-1"/>
    <property type="nucleotide sequence ID" value="NM_001001344.3"/>
</dbReference>
<dbReference type="RefSeq" id="NP_001375289.1">
    <molecule id="Q16720-2"/>
    <property type="nucleotide sequence ID" value="NM_001388360.1"/>
</dbReference>
<dbReference type="RefSeq" id="NP_001375290.1">
    <molecule id="Q16720-1"/>
    <property type="nucleotide sequence ID" value="NM_001388361.1"/>
</dbReference>
<dbReference type="RefSeq" id="NP_001397637.1">
    <molecule id="Q16720-6"/>
    <property type="nucleotide sequence ID" value="NM_001410708.1"/>
</dbReference>
<dbReference type="RefSeq" id="NP_068768.2">
    <molecule id="Q16720-2"/>
    <property type="nucleotide sequence ID" value="NM_021949.3"/>
</dbReference>
<dbReference type="RefSeq" id="XP_005274747.1">
    <property type="nucleotide sequence ID" value="XM_005274690.3"/>
</dbReference>
<dbReference type="RefSeq" id="XP_005274748.1">
    <molecule id="Q16720-4"/>
    <property type="nucleotide sequence ID" value="XM_005274691.4"/>
</dbReference>
<dbReference type="RefSeq" id="XP_005274749.1">
    <property type="nucleotide sequence ID" value="XM_005274692.3"/>
</dbReference>
<dbReference type="RefSeq" id="XP_024308154.1">
    <molecule id="Q16720-3"/>
    <property type="nucleotide sequence ID" value="XM_024452386.2"/>
</dbReference>
<dbReference type="RefSeq" id="XP_047298097.1">
    <molecule id="Q16720-5"/>
    <property type="nucleotide sequence ID" value="XM_047442141.1"/>
</dbReference>
<dbReference type="RefSeq" id="XP_047298098.1">
    <molecule id="Q16720-6"/>
    <property type="nucleotide sequence ID" value="XM_047442142.1"/>
</dbReference>
<dbReference type="RefSeq" id="XP_054183109.1">
    <molecule id="Q16720-4"/>
    <property type="nucleotide sequence ID" value="XM_054327134.1"/>
</dbReference>
<dbReference type="RefSeq" id="XP_054183110.1">
    <molecule id="Q16720-3"/>
    <property type="nucleotide sequence ID" value="XM_054327135.1"/>
</dbReference>
<dbReference type="RefSeq" id="XP_054183111.1">
    <molecule id="Q16720-6"/>
    <property type="nucleotide sequence ID" value="XM_054327136.1"/>
</dbReference>
<dbReference type="SMR" id="Q16720"/>
<dbReference type="BioGRID" id="106982">
    <property type="interactions" value="91"/>
</dbReference>
<dbReference type="FunCoup" id="Q16720">
    <property type="interactions" value="1367"/>
</dbReference>
<dbReference type="IntAct" id="Q16720">
    <property type="interactions" value="67"/>
</dbReference>
<dbReference type="MINT" id="Q16720"/>
<dbReference type="STRING" id="9606.ENSP00000263519"/>
<dbReference type="DrugBank" id="DB01189">
    <property type="generic name" value="Desflurane"/>
</dbReference>
<dbReference type="DrugBank" id="DB01159">
    <property type="generic name" value="Halothane"/>
</dbReference>
<dbReference type="DrugBank" id="DB00867">
    <property type="generic name" value="Ritodrine"/>
</dbReference>
<dbReference type="DrugBank" id="DB01236">
    <property type="generic name" value="Sevoflurane"/>
</dbReference>
<dbReference type="TCDB" id="3.A.3.2.50">
    <property type="family name" value="the p-type atpase (p-atpase) superfamily"/>
</dbReference>
<dbReference type="GlyGen" id="Q16720">
    <property type="glycosylation" value="1 site, 1 O-linked glycan (1 site)"/>
</dbReference>
<dbReference type="iPTMnet" id="Q16720"/>
<dbReference type="PhosphoSitePlus" id="Q16720"/>
<dbReference type="SwissPalm" id="Q16720"/>
<dbReference type="BioMuta" id="ATP2B3"/>
<dbReference type="DMDM" id="116241261"/>
<dbReference type="jPOST" id="Q16720"/>
<dbReference type="MassIVE" id="Q16720"/>
<dbReference type="PaxDb" id="9606-ENSP00000263519"/>
<dbReference type="PeptideAtlas" id="Q16720"/>
<dbReference type="ProteomicsDB" id="61042">
    <molecule id="Q16720-1"/>
</dbReference>
<dbReference type="ProteomicsDB" id="61043">
    <molecule id="Q16720-2"/>
</dbReference>
<dbReference type="ProteomicsDB" id="61044">
    <molecule id="Q16720-3"/>
</dbReference>
<dbReference type="ProteomicsDB" id="61045">
    <molecule id="Q16720-4"/>
</dbReference>
<dbReference type="ProteomicsDB" id="61046">
    <molecule id="Q16720-5"/>
</dbReference>
<dbReference type="ProteomicsDB" id="61047">
    <molecule id="Q16720-6"/>
</dbReference>
<dbReference type="ProteomicsDB" id="61048">
    <molecule id="Q16720-7"/>
</dbReference>
<dbReference type="ProteomicsDB" id="61049">
    <molecule id="Q16720-8"/>
</dbReference>
<dbReference type="Pumba" id="Q16720"/>
<dbReference type="Antibodypedia" id="443">
    <property type="antibodies" value="70 antibodies from 20 providers"/>
</dbReference>
<dbReference type="DNASU" id="492"/>
<dbReference type="Ensembl" id="ENST00000263519.5">
    <molecule id="Q16720-1"/>
    <property type="protein sequence ID" value="ENSP00000263519.4"/>
    <property type="gene ID" value="ENSG00000067842.19"/>
</dbReference>
<dbReference type="Ensembl" id="ENST00000349466.6">
    <molecule id="Q16720-1"/>
    <property type="protein sequence ID" value="ENSP00000343886.2"/>
    <property type="gene ID" value="ENSG00000067842.19"/>
</dbReference>
<dbReference type="Ensembl" id="ENST00000359149.9">
    <molecule id="Q16720-2"/>
    <property type="protein sequence ID" value="ENSP00000352062.3"/>
    <property type="gene ID" value="ENSG00000067842.19"/>
</dbReference>
<dbReference type="Ensembl" id="ENST00000370186.5">
    <molecule id="Q16720-3"/>
    <property type="protein sequence ID" value="ENSP00000359205.1"/>
    <property type="gene ID" value="ENSG00000067842.19"/>
</dbReference>
<dbReference type="Ensembl" id="ENST00000393842.5">
    <molecule id="Q16720-6"/>
    <property type="protein sequence ID" value="ENSP00000377425.1"/>
    <property type="gene ID" value="ENSG00000067842.19"/>
</dbReference>
<dbReference type="GeneID" id="492"/>
<dbReference type="KEGG" id="hsa:492"/>
<dbReference type="MANE-Select" id="ENST00000263519.5">
    <property type="protein sequence ID" value="ENSP00000263519.4"/>
    <property type="RefSeq nucleotide sequence ID" value="NM_001001344.3"/>
    <property type="RefSeq protein sequence ID" value="NP_001001344.1"/>
</dbReference>
<dbReference type="UCSC" id="uc004fhs.2">
    <molecule id="Q16720-1"/>
    <property type="organism name" value="human"/>
</dbReference>
<dbReference type="AGR" id="HGNC:816"/>
<dbReference type="CTD" id="492"/>
<dbReference type="DisGeNET" id="492"/>
<dbReference type="GeneCards" id="ATP2B3"/>
<dbReference type="HGNC" id="HGNC:816">
    <property type="gene designation" value="ATP2B3"/>
</dbReference>
<dbReference type="HPA" id="ENSG00000067842">
    <property type="expression patterns" value="Tissue enriched (choroid)"/>
</dbReference>
<dbReference type="MalaCards" id="ATP2B3"/>
<dbReference type="MIM" id="300014">
    <property type="type" value="gene"/>
</dbReference>
<dbReference type="MIM" id="302500">
    <property type="type" value="phenotype"/>
</dbReference>
<dbReference type="neXtProt" id="NX_Q16720"/>
<dbReference type="OpenTargets" id="ENSG00000067842"/>
<dbReference type="Orphanet" id="314978">
    <property type="disease" value="X-linked non progressive cerebellar ataxia"/>
</dbReference>
<dbReference type="PharmGKB" id="PA25109"/>
<dbReference type="VEuPathDB" id="HostDB:ENSG00000067842"/>
<dbReference type="eggNOG" id="KOG0204">
    <property type="taxonomic scope" value="Eukaryota"/>
</dbReference>
<dbReference type="GeneTree" id="ENSGT00940000160765"/>
<dbReference type="HOGENOM" id="CLU_002360_9_0_1"/>
<dbReference type="InParanoid" id="Q16720"/>
<dbReference type="OMA" id="QLAVTFM"/>
<dbReference type="OrthoDB" id="116380at2759"/>
<dbReference type="PAN-GO" id="Q16720">
    <property type="GO annotations" value="5 GO annotations based on evolutionary models"/>
</dbReference>
<dbReference type="PhylomeDB" id="Q16720"/>
<dbReference type="TreeFam" id="TF300330"/>
<dbReference type="BRENDA" id="7.2.2.10">
    <property type="organism ID" value="2681"/>
</dbReference>
<dbReference type="PathwayCommons" id="Q16720"/>
<dbReference type="Reactome" id="R-HSA-418359">
    <property type="pathway name" value="Reduction of cytosolic Ca++ levels"/>
</dbReference>
<dbReference type="Reactome" id="R-HSA-5578775">
    <property type="pathway name" value="Ion homeostasis"/>
</dbReference>
<dbReference type="Reactome" id="R-HSA-936837">
    <property type="pathway name" value="Ion transport by P-type ATPases"/>
</dbReference>
<dbReference type="SignaLink" id="Q16720"/>
<dbReference type="BioGRID-ORCS" id="492">
    <property type="hits" value="13 hits in 770 CRISPR screens"/>
</dbReference>
<dbReference type="CD-CODE" id="91857CE7">
    <property type="entry name" value="Nucleolus"/>
</dbReference>
<dbReference type="CD-CODE" id="FB4E32DD">
    <property type="entry name" value="Presynaptic clusters and postsynaptic densities"/>
</dbReference>
<dbReference type="ChiTaRS" id="ATP2B3">
    <property type="organism name" value="human"/>
</dbReference>
<dbReference type="GeneWiki" id="ATP2B3"/>
<dbReference type="GenomeRNAi" id="492"/>
<dbReference type="Pharos" id="Q16720">
    <property type="development level" value="Tbio"/>
</dbReference>
<dbReference type="PRO" id="PR:Q16720"/>
<dbReference type="Proteomes" id="UP000005640">
    <property type="component" value="Chromosome X"/>
</dbReference>
<dbReference type="RNAct" id="Q16720">
    <property type="molecule type" value="protein"/>
</dbReference>
<dbReference type="Bgee" id="ENSG00000067842">
    <property type="expression patterns" value="Expressed in endothelial cell and 110 other cell types or tissues"/>
</dbReference>
<dbReference type="GO" id="GO:1903561">
    <property type="term" value="C:extracellular vesicle"/>
    <property type="evidence" value="ECO:0007005"/>
    <property type="project" value="UniProtKB"/>
</dbReference>
<dbReference type="GO" id="GO:0098982">
    <property type="term" value="C:GABA-ergic synapse"/>
    <property type="evidence" value="ECO:0000314"/>
    <property type="project" value="SynGO"/>
</dbReference>
<dbReference type="GO" id="GO:0098978">
    <property type="term" value="C:glutamatergic synapse"/>
    <property type="evidence" value="ECO:0000314"/>
    <property type="project" value="SynGO"/>
</dbReference>
<dbReference type="GO" id="GO:0043231">
    <property type="term" value="C:intracellular membrane-bounded organelle"/>
    <property type="evidence" value="ECO:0000318"/>
    <property type="project" value="GO_Central"/>
</dbReference>
<dbReference type="GO" id="GO:1990032">
    <property type="term" value="C:parallel fiber"/>
    <property type="evidence" value="ECO:0000250"/>
    <property type="project" value="UniProtKB"/>
</dbReference>
<dbReference type="GO" id="GO:0098688">
    <property type="term" value="C:parallel fiber to Purkinje cell synapse"/>
    <property type="evidence" value="ECO:0000250"/>
    <property type="project" value="UniProtKB"/>
</dbReference>
<dbReference type="GO" id="GO:0005886">
    <property type="term" value="C:plasma membrane"/>
    <property type="evidence" value="ECO:0000314"/>
    <property type="project" value="SynGO-UCL"/>
</dbReference>
<dbReference type="GO" id="GO:0042734">
    <property type="term" value="C:presynaptic membrane"/>
    <property type="evidence" value="ECO:0000250"/>
    <property type="project" value="UniProtKB"/>
</dbReference>
<dbReference type="GO" id="GO:0005524">
    <property type="term" value="F:ATP binding"/>
    <property type="evidence" value="ECO:0007669"/>
    <property type="project" value="UniProtKB-KW"/>
</dbReference>
<dbReference type="GO" id="GO:0016887">
    <property type="term" value="F:ATP hydrolysis activity"/>
    <property type="evidence" value="ECO:0007669"/>
    <property type="project" value="InterPro"/>
</dbReference>
<dbReference type="GO" id="GO:0015085">
    <property type="term" value="F:calcium ion transmembrane transporter activity"/>
    <property type="evidence" value="ECO:0000314"/>
    <property type="project" value="ARUK-UCL"/>
</dbReference>
<dbReference type="GO" id="GO:0005516">
    <property type="term" value="F:calmodulin binding"/>
    <property type="evidence" value="ECO:0007669"/>
    <property type="project" value="UniProtKB-KW"/>
</dbReference>
<dbReference type="GO" id="GO:0046872">
    <property type="term" value="F:metal ion binding"/>
    <property type="evidence" value="ECO:0007669"/>
    <property type="project" value="UniProtKB-KW"/>
</dbReference>
<dbReference type="GO" id="GO:0005388">
    <property type="term" value="F:P-type calcium transporter activity"/>
    <property type="evidence" value="ECO:0000318"/>
    <property type="project" value="GO_Central"/>
</dbReference>
<dbReference type="GO" id="GO:1905056">
    <property type="term" value="F:P-type calcium transporter activity involved in regulation of presynaptic cytosolic calcium ion concentration"/>
    <property type="evidence" value="ECO:0000314"/>
    <property type="project" value="SynGO"/>
</dbReference>
<dbReference type="GO" id="GO:1990034">
    <property type="term" value="P:calcium ion export across plasma membrane"/>
    <property type="evidence" value="ECO:0000314"/>
    <property type="project" value="UniProtKB"/>
</dbReference>
<dbReference type="GO" id="GO:0034220">
    <property type="term" value="P:monoatomic ion transmembrane transport"/>
    <property type="evidence" value="ECO:0000304"/>
    <property type="project" value="Reactome"/>
</dbReference>
<dbReference type="GO" id="GO:1903779">
    <property type="term" value="P:regulation of cardiac conduction"/>
    <property type="evidence" value="ECO:0000304"/>
    <property type="project" value="Reactome"/>
</dbReference>
<dbReference type="GO" id="GO:0051480">
    <property type="term" value="P:regulation of cytosolic calcium ion concentration"/>
    <property type="evidence" value="ECO:0000314"/>
    <property type="project" value="ARUK-UCL"/>
</dbReference>
<dbReference type="CDD" id="cd02081">
    <property type="entry name" value="P-type_ATPase_Ca_PMCA-like"/>
    <property type="match status" value="1"/>
</dbReference>
<dbReference type="FunFam" id="1.20.1110.10:FF:000001">
    <property type="entry name" value="Calcium-transporting ATPase"/>
    <property type="match status" value="1"/>
</dbReference>
<dbReference type="FunFam" id="1.20.1110.10:FF:000002">
    <property type="entry name" value="Calcium-transporting ATPase"/>
    <property type="match status" value="1"/>
</dbReference>
<dbReference type="FunFam" id="1.20.1110.10:FF:000008">
    <property type="entry name" value="Calcium-transporting ATPase"/>
    <property type="match status" value="1"/>
</dbReference>
<dbReference type="FunFam" id="2.70.150.10:FF:000001">
    <property type="entry name" value="Calcium-transporting ATPase"/>
    <property type="match status" value="1"/>
</dbReference>
<dbReference type="FunFam" id="3.40.1110.10:FF:000032">
    <property type="entry name" value="Calcium-transporting ATPase"/>
    <property type="match status" value="1"/>
</dbReference>
<dbReference type="FunFam" id="3.40.50.1000:FF:000007">
    <property type="entry name" value="Calcium-transporting ATPase"/>
    <property type="match status" value="1"/>
</dbReference>
<dbReference type="Gene3D" id="3.40.1110.10">
    <property type="entry name" value="Calcium-transporting ATPase, cytoplasmic domain N"/>
    <property type="match status" value="1"/>
</dbReference>
<dbReference type="Gene3D" id="2.70.150.10">
    <property type="entry name" value="Calcium-transporting ATPase, cytoplasmic transduction domain A"/>
    <property type="match status" value="1"/>
</dbReference>
<dbReference type="Gene3D" id="1.20.1110.10">
    <property type="entry name" value="Calcium-transporting ATPase, transmembrane domain"/>
    <property type="match status" value="2"/>
</dbReference>
<dbReference type="Gene3D" id="3.40.50.1000">
    <property type="entry name" value="HAD superfamily/HAD-like"/>
    <property type="match status" value="1"/>
</dbReference>
<dbReference type="InterPro" id="IPR022141">
    <property type="entry name" value="ATP_Ca_trans_C"/>
</dbReference>
<dbReference type="InterPro" id="IPR006068">
    <property type="entry name" value="ATPase_P-typ_cation-transptr_C"/>
</dbReference>
<dbReference type="InterPro" id="IPR004014">
    <property type="entry name" value="ATPase_P-typ_cation-transptr_N"/>
</dbReference>
<dbReference type="InterPro" id="IPR023299">
    <property type="entry name" value="ATPase_P-typ_cyto_dom_N"/>
</dbReference>
<dbReference type="InterPro" id="IPR018303">
    <property type="entry name" value="ATPase_P-typ_P_site"/>
</dbReference>
<dbReference type="InterPro" id="IPR023298">
    <property type="entry name" value="ATPase_P-typ_TM_dom_sf"/>
</dbReference>
<dbReference type="InterPro" id="IPR008250">
    <property type="entry name" value="ATPase_P-typ_transduc_dom_A_sf"/>
</dbReference>
<dbReference type="InterPro" id="IPR036412">
    <property type="entry name" value="HAD-like_sf"/>
</dbReference>
<dbReference type="InterPro" id="IPR023214">
    <property type="entry name" value="HAD_sf"/>
</dbReference>
<dbReference type="InterPro" id="IPR006408">
    <property type="entry name" value="P-type_ATPase_IIB"/>
</dbReference>
<dbReference type="InterPro" id="IPR001757">
    <property type="entry name" value="P_typ_ATPase"/>
</dbReference>
<dbReference type="InterPro" id="IPR044492">
    <property type="entry name" value="P_typ_ATPase_HD_dom"/>
</dbReference>
<dbReference type="NCBIfam" id="TIGR01517">
    <property type="entry name" value="ATPase-IIB_Ca"/>
    <property type="match status" value="1"/>
</dbReference>
<dbReference type="NCBIfam" id="TIGR01494">
    <property type="entry name" value="ATPase_P-type"/>
    <property type="match status" value="3"/>
</dbReference>
<dbReference type="PANTHER" id="PTHR24093">
    <property type="entry name" value="CATION TRANSPORTING ATPASE"/>
    <property type="match status" value="1"/>
</dbReference>
<dbReference type="PANTHER" id="PTHR24093:SF284">
    <property type="entry name" value="PLASMA MEMBRANE CALCIUM-TRANSPORTING ATPASE 3"/>
    <property type="match status" value="1"/>
</dbReference>
<dbReference type="Pfam" id="PF12424">
    <property type="entry name" value="ATP_Ca_trans_C"/>
    <property type="match status" value="1"/>
</dbReference>
<dbReference type="Pfam" id="PF13246">
    <property type="entry name" value="Cation_ATPase"/>
    <property type="match status" value="1"/>
</dbReference>
<dbReference type="Pfam" id="PF00689">
    <property type="entry name" value="Cation_ATPase_C"/>
    <property type="match status" value="1"/>
</dbReference>
<dbReference type="Pfam" id="PF00690">
    <property type="entry name" value="Cation_ATPase_N"/>
    <property type="match status" value="1"/>
</dbReference>
<dbReference type="Pfam" id="PF00122">
    <property type="entry name" value="E1-E2_ATPase"/>
    <property type="match status" value="2"/>
</dbReference>
<dbReference type="Pfam" id="PF00702">
    <property type="entry name" value="Hydrolase"/>
    <property type="match status" value="1"/>
</dbReference>
<dbReference type="PRINTS" id="PR00119">
    <property type="entry name" value="CATATPASE"/>
</dbReference>
<dbReference type="SFLD" id="SFLDS00003">
    <property type="entry name" value="Haloacid_Dehalogenase"/>
    <property type="match status" value="1"/>
</dbReference>
<dbReference type="SFLD" id="SFLDF00027">
    <property type="entry name" value="p-type_atpase"/>
    <property type="match status" value="1"/>
</dbReference>
<dbReference type="SMART" id="SM00831">
    <property type="entry name" value="Cation_ATPase_N"/>
    <property type="match status" value="1"/>
</dbReference>
<dbReference type="SUPFAM" id="SSF81653">
    <property type="entry name" value="Calcium ATPase, transduction domain A"/>
    <property type="match status" value="1"/>
</dbReference>
<dbReference type="SUPFAM" id="SSF81665">
    <property type="entry name" value="Calcium ATPase, transmembrane domain M"/>
    <property type="match status" value="1"/>
</dbReference>
<dbReference type="SUPFAM" id="SSF56784">
    <property type="entry name" value="HAD-like"/>
    <property type="match status" value="1"/>
</dbReference>
<dbReference type="SUPFAM" id="SSF81660">
    <property type="entry name" value="Metal cation-transporting ATPase, ATP-binding domain N"/>
    <property type="match status" value="1"/>
</dbReference>
<dbReference type="PROSITE" id="PS00154">
    <property type="entry name" value="ATPASE_E1_E2"/>
    <property type="match status" value="1"/>
</dbReference>
<organism>
    <name type="scientific">Homo sapiens</name>
    <name type="common">Human</name>
    <dbReference type="NCBI Taxonomy" id="9606"/>
    <lineage>
        <taxon>Eukaryota</taxon>
        <taxon>Metazoa</taxon>
        <taxon>Chordata</taxon>
        <taxon>Craniata</taxon>
        <taxon>Vertebrata</taxon>
        <taxon>Euteleostomi</taxon>
        <taxon>Mammalia</taxon>
        <taxon>Eutheria</taxon>
        <taxon>Euarchontoglires</taxon>
        <taxon>Primates</taxon>
        <taxon>Haplorrhini</taxon>
        <taxon>Catarrhini</taxon>
        <taxon>Hominidae</taxon>
        <taxon>Homo</taxon>
    </lineage>
</organism>